<evidence type="ECO:0000255" key="1">
    <source>
        <dbReference type="HAMAP-Rule" id="MF_00428"/>
    </source>
</evidence>
<gene>
    <name evidence="1" type="primary">nqrD</name>
</gene>
<comment type="function">
    <text evidence="1">NQR complex catalyzes the reduction of ubiquinone-1 to ubiquinol by two successive reactions, coupled with the transport of Na(+) ions from the cytoplasm to the periplasm. NqrA to NqrE are probably involved in the second step, the conversion of ubisemiquinone to ubiquinol.</text>
</comment>
<comment type="catalytic activity">
    <reaction evidence="1">
        <text>a ubiquinone + n Na(+)(in) + NADH + H(+) = a ubiquinol + n Na(+)(out) + NAD(+)</text>
        <dbReference type="Rhea" id="RHEA:47748"/>
        <dbReference type="Rhea" id="RHEA-COMP:9565"/>
        <dbReference type="Rhea" id="RHEA-COMP:9566"/>
        <dbReference type="ChEBI" id="CHEBI:15378"/>
        <dbReference type="ChEBI" id="CHEBI:16389"/>
        <dbReference type="ChEBI" id="CHEBI:17976"/>
        <dbReference type="ChEBI" id="CHEBI:29101"/>
        <dbReference type="ChEBI" id="CHEBI:57540"/>
        <dbReference type="ChEBI" id="CHEBI:57945"/>
        <dbReference type="EC" id="7.2.1.1"/>
    </reaction>
</comment>
<comment type="subunit">
    <text evidence="1">Composed of six subunits; NqrA, NqrB, NqrC, NqrD, NqrE and NqrF.</text>
</comment>
<comment type="subcellular location">
    <subcellularLocation>
        <location evidence="1">Cell inner membrane</location>
        <topology evidence="1">Multi-pass membrane protein</topology>
    </subcellularLocation>
</comment>
<comment type="similarity">
    <text evidence="1">Belongs to the NqrDE/RnfAE family.</text>
</comment>
<feature type="chain" id="PRO_0000214240" description="Na(+)-translocating NADH-quinone reductase subunit D">
    <location>
        <begin position="1"/>
        <end position="210"/>
    </location>
</feature>
<feature type="transmembrane region" description="Helical" evidence="1">
    <location>
        <begin position="11"/>
        <end position="31"/>
    </location>
</feature>
<feature type="transmembrane region" description="Helical" evidence="1">
    <location>
        <begin position="42"/>
        <end position="62"/>
    </location>
</feature>
<feature type="transmembrane region" description="Helical" evidence="1">
    <location>
        <begin position="70"/>
        <end position="90"/>
    </location>
</feature>
<feature type="transmembrane region" description="Helical" evidence="1">
    <location>
        <begin position="103"/>
        <end position="123"/>
    </location>
</feature>
<feature type="transmembrane region" description="Helical" evidence="1">
    <location>
        <begin position="131"/>
        <end position="151"/>
    </location>
</feature>
<feature type="transmembrane region" description="Helical" evidence="1">
    <location>
        <begin position="178"/>
        <end position="198"/>
    </location>
</feature>
<dbReference type="EC" id="7.2.1.1" evidence="1"/>
<dbReference type="EMBL" id="AB159077">
    <property type="protein sequence ID" value="BAD14951.1"/>
    <property type="molecule type" value="Genomic_DNA"/>
</dbReference>
<dbReference type="RefSeq" id="WP_013856174.1">
    <property type="nucleotide sequence ID" value="NZ_VTYO01000002.1"/>
</dbReference>
<dbReference type="SMR" id="Q75R61"/>
<dbReference type="STRING" id="55601.AA407_03530"/>
<dbReference type="OMA" id="CIIMGRF"/>
<dbReference type="OrthoDB" id="9782945at2"/>
<dbReference type="GO" id="GO:0005886">
    <property type="term" value="C:plasma membrane"/>
    <property type="evidence" value="ECO:0007669"/>
    <property type="project" value="UniProtKB-SubCell"/>
</dbReference>
<dbReference type="GO" id="GO:0016655">
    <property type="term" value="F:oxidoreductase activity, acting on NAD(P)H, quinone or similar compound as acceptor"/>
    <property type="evidence" value="ECO:0007669"/>
    <property type="project" value="UniProtKB-UniRule"/>
</dbReference>
<dbReference type="GO" id="GO:0006814">
    <property type="term" value="P:sodium ion transport"/>
    <property type="evidence" value="ECO:0007669"/>
    <property type="project" value="UniProtKB-UniRule"/>
</dbReference>
<dbReference type="HAMAP" id="MF_00428">
    <property type="entry name" value="NqrD"/>
    <property type="match status" value="1"/>
</dbReference>
<dbReference type="InterPro" id="IPR011292">
    <property type="entry name" value="NqrD"/>
</dbReference>
<dbReference type="InterPro" id="IPR003667">
    <property type="entry name" value="NqrDE/RnfAE"/>
</dbReference>
<dbReference type="NCBIfam" id="TIGR01939">
    <property type="entry name" value="nqrD"/>
    <property type="match status" value="1"/>
</dbReference>
<dbReference type="NCBIfam" id="NF006777">
    <property type="entry name" value="PRK09292.1"/>
    <property type="match status" value="1"/>
</dbReference>
<dbReference type="NCBIfam" id="NF009070">
    <property type="entry name" value="PRK12405.1"/>
    <property type="match status" value="1"/>
</dbReference>
<dbReference type="PANTHER" id="PTHR30586">
    <property type="entry name" value="ELECTRON TRANSPORT COMPLEX PROTEIN RNFE"/>
    <property type="match status" value="1"/>
</dbReference>
<dbReference type="PANTHER" id="PTHR30586:SF1">
    <property type="entry name" value="NA(+)-TRANSLOCATING NADH-QUINONE REDUCTASE SUBUNIT D"/>
    <property type="match status" value="1"/>
</dbReference>
<dbReference type="Pfam" id="PF02508">
    <property type="entry name" value="Rnf-Nqr"/>
    <property type="match status" value="1"/>
</dbReference>
<dbReference type="PIRSF" id="PIRSF006102">
    <property type="entry name" value="NQR_DE"/>
    <property type="match status" value="1"/>
</dbReference>
<organism>
    <name type="scientific">Vibrio anguillarum</name>
    <name type="common">Listonella anguillarum</name>
    <dbReference type="NCBI Taxonomy" id="55601"/>
    <lineage>
        <taxon>Bacteria</taxon>
        <taxon>Pseudomonadati</taxon>
        <taxon>Pseudomonadota</taxon>
        <taxon>Gammaproteobacteria</taxon>
        <taxon>Vibrionales</taxon>
        <taxon>Vibrionaceae</taxon>
        <taxon>Vibrio</taxon>
    </lineage>
</organism>
<name>NQRD_VIBAN</name>
<keyword id="KW-0997">Cell inner membrane</keyword>
<keyword id="KW-1003">Cell membrane</keyword>
<keyword id="KW-0406">Ion transport</keyword>
<keyword id="KW-0472">Membrane</keyword>
<keyword id="KW-0520">NAD</keyword>
<keyword id="KW-0915">Sodium</keyword>
<keyword id="KW-0739">Sodium transport</keyword>
<keyword id="KW-1278">Translocase</keyword>
<keyword id="KW-0812">Transmembrane</keyword>
<keyword id="KW-1133">Transmembrane helix</keyword>
<keyword id="KW-0813">Transport</keyword>
<keyword id="KW-0830">Ubiquinone</keyword>
<protein>
    <recommendedName>
        <fullName evidence="1">Na(+)-translocating NADH-quinone reductase subunit D</fullName>
        <shortName evidence="1">Na(+)-NQR subunit D</shortName>
        <shortName evidence="1">Na(+)-translocating NQR subunit D</shortName>
        <ecNumber evidence="1">7.2.1.1</ecNumber>
    </recommendedName>
    <alternativeName>
        <fullName evidence="1">NQR complex subunit D</fullName>
    </alternativeName>
    <alternativeName>
        <fullName evidence="1">NQR-1 subunit D</fullName>
    </alternativeName>
</protein>
<accession>Q75R61</accession>
<reference key="1">
    <citation type="submission" date="2004-01" db="EMBL/GenBank/DDBJ databases">
        <title>Cloning, sequencing and transcriptional regulation of Na+-dependent NADH:quinone oxidoreductase gene of Vibrio anguillarum, a fish pathogen.</title>
        <authorList>
            <person name="Fujiwara-Nagata E."/>
            <person name="Eguchi Y."/>
            <person name="Utsumi R."/>
            <person name="Eguchi M."/>
        </authorList>
    </citation>
    <scope>NUCLEOTIDE SEQUENCE [GENOMIC DNA]</scope>
</reference>
<sequence length="210" mass="22886">MSSAKEIKKSILAPVLDNNPIALQVLGVCSALAVTTKLETAFVMTLAVMFVTAFSNLFVSLIRHHIPNSVRIIVQMAIIASLVIVVDQILRAYLYDISKQLSVFVGLIITNCIVMGRAEAFAMKSAPIPSFIDGIGNGLGYGFVLITVGFFRELLGSGKLFGMEVLPLVKDGGWYQPNGLMLLAPSAFFLIGFMIWAIRTFKPEQLEAKE</sequence>
<proteinExistence type="inferred from homology"/>